<keyword id="KW-0687">Ribonucleoprotein</keyword>
<keyword id="KW-0689">Ribosomal protein</keyword>
<reference key="1">
    <citation type="journal article" date="2007" name="PLoS ONE">
        <title>A glimpse of streptococcal toxic shock syndrome from comparative genomics of S. suis 2 Chinese isolates.</title>
        <authorList>
            <person name="Chen C."/>
            <person name="Tang J."/>
            <person name="Dong W."/>
            <person name="Wang C."/>
            <person name="Feng Y."/>
            <person name="Wang J."/>
            <person name="Zheng F."/>
            <person name="Pan X."/>
            <person name="Liu D."/>
            <person name="Li M."/>
            <person name="Song Y."/>
            <person name="Zhu X."/>
            <person name="Sun H."/>
            <person name="Feng T."/>
            <person name="Guo Z."/>
            <person name="Ju A."/>
            <person name="Ge J."/>
            <person name="Dong Y."/>
            <person name="Sun W."/>
            <person name="Jiang Y."/>
            <person name="Wang J."/>
            <person name="Yan J."/>
            <person name="Yang H."/>
            <person name="Wang X."/>
            <person name="Gao G.F."/>
            <person name="Yang R."/>
            <person name="Wang J."/>
            <person name="Yu J."/>
        </authorList>
    </citation>
    <scope>NUCLEOTIDE SEQUENCE [LARGE SCALE GENOMIC DNA]</scope>
    <source>
        <strain>05ZYH33</strain>
    </source>
</reference>
<protein>
    <recommendedName>
        <fullName evidence="1">Large ribosomal subunit protein bL33</fullName>
    </recommendedName>
    <alternativeName>
        <fullName evidence="2">50S ribosomal protein L33</fullName>
    </alternativeName>
</protein>
<proteinExistence type="inferred from homology"/>
<organism>
    <name type="scientific">Streptococcus suis (strain 05ZYH33)</name>
    <dbReference type="NCBI Taxonomy" id="391295"/>
    <lineage>
        <taxon>Bacteria</taxon>
        <taxon>Bacillati</taxon>
        <taxon>Bacillota</taxon>
        <taxon>Bacilli</taxon>
        <taxon>Lactobacillales</taxon>
        <taxon>Streptococcaceae</taxon>
        <taxon>Streptococcus</taxon>
    </lineage>
</organism>
<comment type="similarity">
    <text evidence="1">Belongs to the bacterial ribosomal protein bL33 family.</text>
</comment>
<name>RL33_STRSY</name>
<sequence length="49" mass="5925">MRVNITLEHKESGERLYLTSKNKRNTPDRLQLKKYSPKLRKHVIFTEVK</sequence>
<evidence type="ECO:0000255" key="1">
    <source>
        <dbReference type="HAMAP-Rule" id="MF_00294"/>
    </source>
</evidence>
<evidence type="ECO:0000305" key="2"/>
<dbReference type="EMBL" id="CP000407">
    <property type="protein sequence ID" value="ABP89244.1"/>
    <property type="molecule type" value="Genomic_DNA"/>
</dbReference>
<dbReference type="SMR" id="A4VT05"/>
<dbReference type="STRING" id="391295.SSU05_0276"/>
<dbReference type="KEGG" id="ssu:SSU05_0276"/>
<dbReference type="eggNOG" id="COG0267">
    <property type="taxonomic scope" value="Bacteria"/>
</dbReference>
<dbReference type="HOGENOM" id="CLU_190949_3_2_9"/>
<dbReference type="GO" id="GO:0005737">
    <property type="term" value="C:cytoplasm"/>
    <property type="evidence" value="ECO:0007669"/>
    <property type="project" value="UniProtKB-ARBA"/>
</dbReference>
<dbReference type="GO" id="GO:1990904">
    <property type="term" value="C:ribonucleoprotein complex"/>
    <property type="evidence" value="ECO:0007669"/>
    <property type="project" value="UniProtKB-KW"/>
</dbReference>
<dbReference type="GO" id="GO:0005840">
    <property type="term" value="C:ribosome"/>
    <property type="evidence" value="ECO:0007669"/>
    <property type="project" value="UniProtKB-KW"/>
</dbReference>
<dbReference type="GO" id="GO:0003735">
    <property type="term" value="F:structural constituent of ribosome"/>
    <property type="evidence" value="ECO:0007669"/>
    <property type="project" value="InterPro"/>
</dbReference>
<dbReference type="GO" id="GO:0006412">
    <property type="term" value="P:translation"/>
    <property type="evidence" value="ECO:0007669"/>
    <property type="project" value="UniProtKB-UniRule"/>
</dbReference>
<dbReference type="Gene3D" id="2.20.28.120">
    <property type="entry name" value="Ribosomal protein L33"/>
    <property type="match status" value="1"/>
</dbReference>
<dbReference type="HAMAP" id="MF_00294">
    <property type="entry name" value="Ribosomal_bL33"/>
    <property type="match status" value="1"/>
</dbReference>
<dbReference type="InterPro" id="IPR001705">
    <property type="entry name" value="Ribosomal_bL33"/>
</dbReference>
<dbReference type="InterPro" id="IPR018264">
    <property type="entry name" value="Ribosomal_bL33_CS"/>
</dbReference>
<dbReference type="InterPro" id="IPR038584">
    <property type="entry name" value="Ribosomal_bL33_sf"/>
</dbReference>
<dbReference type="InterPro" id="IPR011332">
    <property type="entry name" value="Ribosomal_zn-bd"/>
</dbReference>
<dbReference type="NCBIfam" id="NF001764">
    <property type="entry name" value="PRK00504.1"/>
    <property type="match status" value="1"/>
</dbReference>
<dbReference type="NCBIfam" id="NF001860">
    <property type="entry name" value="PRK00595.1"/>
    <property type="match status" value="1"/>
</dbReference>
<dbReference type="NCBIfam" id="TIGR01023">
    <property type="entry name" value="rpmG_bact"/>
    <property type="match status" value="1"/>
</dbReference>
<dbReference type="PANTHER" id="PTHR43168">
    <property type="entry name" value="50S RIBOSOMAL PROTEIN L33, CHLOROPLASTIC"/>
    <property type="match status" value="1"/>
</dbReference>
<dbReference type="PANTHER" id="PTHR43168:SF2">
    <property type="entry name" value="LARGE RIBOSOMAL SUBUNIT PROTEIN BL33C"/>
    <property type="match status" value="1"/>
</dbReference>
<dbReference type="Pfam" id="PF00471">
    <property type="entry name" value="Ribosomal_L33"/>
    <property type="match status" value="1"/>
</dbReference>
<dbReference type="SUPFAM" id="SSF57829">
    <property type="entry name" value="Zn-binding ribosomal proteins"/>
    <property type="match status" value="1"/>
</dbReference>
<dbReference type="PROSITE" id="PS00582">
    <property type="entry name" value="RIBOSOMAL_L33"/>
    <property type="match status" value="1"/>
</dbReference>
<feature type="chain" id="PRO_0000356740" description="Large ribosomal subunit protein bL33">
    <location>
        <begin position="1"/>
        <end position="49"/>
    </location>
</feature>
<accession>A4VT05</accession>
<gene>
    <name evidence="1" type="primary">rpmG</name>
    <name type="ordered locus">SSU05_0276</name>
</gene>